<organism>
    <name type="scientific">Streptomyces avermitilis (strain ATCC 31267 / DSM 46492 / JCM 5070 / NBRC 14893 / NCIMB 12804 / NRRL 8165 / MA-4680)</name>
    <dbReference type="NCBI Taxonomy" id="227882"/>
    <lineage>
        <taxon>Bacteria</taxon>
        <taxon>Bacillati</taxon>
        <taxon>Actinomycetota</taxon>
        <taxon>Actinomycetes</taxon>
        <taxon>Kitasatosporales</taxon>
        <taxon>Streptomycetaceae</taxon>
        <taxon>Streptomyces</taxon>
    </lineage>
</organism>
<keyword id="KW-0067">ATP-binding</keyword>
<keyword id="KW-0436">Ligase</keyword>
<keyword id="KW-0547">Nucleotide-binding</keyword>
<keyword id="KW-0658">Purine biosynthesis</keyword>
<keyword id="KW-1185">Reference proteome</keyword>
<proteinExistence type="inferred from homology"/>
<evidence type="ECO:0000255" key="1">
    <source>
        <dbReference type="HAMAP-Rule" id="MF_00137"/>
    </source>
</evidence>
<evidence type="ECO:0000256" key="2">
    <source>
        <dbReference type="SAM" id="MobiDB-lite"/>
    </source>
</evidence>
<reference key="1">
    <citation type="journal article" date="2001" name="Proc. Natl. Acad. Sci. U.S.A.">
        <title>Genome sequence of an industrial microorganism Streptomyces avermitilis: deducing the ability of producing secondary metabolites.</title>
        <authorList>
            <person name="Omura S."/>
            <person name="Ikeda H."/>
            <person name="Ishikawa J."/>
            <person name="Hanamoto A."/>
            <person name="Takahashi C."/>
            <person name="Shinose M."/>
            <person name="Takahashi Y."/>
            <person name="Horikawa H."/>
            <person name="Nakazawa H."/>
            <person name="Osonoe T."/>
            <person name="Kikuchi H."/>
            <person name="Shiba T."/>
            <person name="Sakaki Y."/>
            <person name="Hattori M."/>
        </authorList>
    </citation>
    <scope>NUCLEOTIDE SEQUENCE [LARGE SCALE GENOMIC DNA]</scope>
    <source>
        <strain>ATCC 31267 / DSM 46492 / JCM 5070 / NBRC 14893 / NCIMB 12804 / NRRL 8165 / MA-4680</strain>
    </source>
</reference>
<reference key="2">
    <citation type="journal article" date="2003" name="Nat. Biotechnol.">
        <title>Complete genome sequence and comparative analysis of the industrial microorganism Streptomyces avermitilis.</title>
        <authorList>
            <person name="Ikeda H."/>
            <person name="Ishikawa J."/>
            <person name="Hanamoto A."/>
            <person name="Shinose M."/>
            <person name="Kikuchi H."/>
            <person name="Shiba T."/>
            <person name="Sakaki Y."/>
            <person name="Hattori M."/>
            <person name="Omura S."/>
        </authorList>
    </citation>
    <scope>NUCLEOTIDE SEQUENCE [LARGE SCALE GENOMIC DNA]</scope>
    <source>
        <strain>ATCC 31267 / DSM 46492 / JCM 5070 / NBRC 14893 / NCIMB 12804 / NRRL 8165 / MA-4680</strain>
    </source>
</reference>
<feature type="chain" id="PRO_0000100879" description="Phosphoribosylaminoimidazole-succinocarboxamide synthase">
    <location>
        <begin position="1"/>
        <end position="299"/>
    </location>
</feature>
<feature type="region of interest" description="Disordered" evidence="2">
    <location>
        <begin position="259"/>
        <end position="279"/>
    </location>
</feature>
<dbReference type="EC" id="6.3.2.6" evidence="1"/>
<dbReference type="EMBL" id="BA000030">
    <property type="protein sequence ID" value="BAC71858.1"/>
    <property type="molecule type" value="Genomic_DNA"/>
</dbReference>
<dbReference type="RefSeq" id="WP_010985574.1">
    <property type="nucleotide sequence ID" value="NZ_JZJK01000079.1"/>
</dbReference>
<dbReference type="SMR" id="Q82FV6"/>
<dbReference type="GeneID" id="41541224"/>
<dbReference type="KEGG" id="sma:SAVERM_4146"/>
<dbReference type="eggNOG" id="COG0152">
    <property type="taxonomic scope" value="Bacteria"/>
</dbReference>
<dbReference type="HOGENOM" id="CLU_045637_0_0_11"/>
<dbReference type="OrthoDB" id="9801549at2"/>
<dbReference type="UniPathway" id="UPA00074">
    <property type="reaction ID" value="UER00131"/>
</dbReference>
<dbReference type="Proteomes" id="UP000000428">
    <property type="component" value="Chromosome"/>
</dbReference>
<dbReference type="GO" id="GO:0005737">
    <property type="term" value="C:cytoplasm"/>
    <property type="evidence" value="ECO:0007669"/>
    <property type="project" value="TreeGrafter"/>
</dbReference>
<dbReference type="GO" id="GO:0005524">
    <property type="term" value="F:ATP binding"/>
    <property type="evidence" value="ECO:0007669"/>
    <property type="project" value="UniProtKB-KW"/>
</dbReference>
<dbReference type="GO" id="GO:0004639">
    <property type="term" value="F:phosphoribosylaminoimidazolesuccinocarboxamide synthase activity"/>
    <property type="evidence" value="ECO:0007669"/>
    <property type="project" value="UniProtKB-UniRule"/>
</dbReference>
<dbReference type="GO" id="GO:0006189">
    <property type="term" value="P:'de novo' IMP biosynthetic process"/>
    <property type="evidence" value="ECO:0007669"/>
    <property type="project" value="UniProtKB-UniRule"/>
</dbReference>
<dbReference type="CDD" id="cd01414">
    <property type="entry name" value="SAICAR_synt_Sc"/>
    <property type="match status" value="1"/>
</dbReference>
<dbReference type="FunFam" id="3.30.200.20:FF:000199">
    <property type="entry name" value="Phosphoribosylaminoimidazole-succinocarboxamide synthase"/>
    <property type="match status" value="1"/>
</dbReference>
<dbReference type="FunFam" id="3.30.470.20:FF:000015">
    <property type="entry name" value="Phosphoribosylaminoimidazole-succinocarboxamide synthase"/>
    <property type="match status" value="1"/>
</dbReference>
<dbReference type="Gene3D" id="3.30.470.20">
    <property type="entry name" value="ATP-grasp fold, B domain"/>
    <property type="match status" value="1"/>
</dbReference>
<dbReference type="Gene3D" id="3.30.200.20">
    <property type="entry name" value="Phosphorylase Kinase, domain 1"/>
    <property type="match status" value="1"/>
</dbReference>
<dbReference type="HAMAP" id="MF_00137">
    <property type="entry name" value="SAICAR_synth"/>
    <property type="match status" value="1"/>
</dbReference>
<dbReference type="InterPro" id="IPR028923">
    <property type="entry name" value="SAICAR_synt/ADE2_N"/>
</dbReference>
<dbReference type="InterPro" id="IPR001636">
    <property type="entry name" value="SAICAR_synth"/>
</dbReference>
<dbReference type="InterPro" id="IPR018236">
    <property type="entry name" value="SAICAR_synthetase_CS"/>
</dbReference>
<dbReference type="NCBIfam" id="NF010568">
    <property type="entry name" value="PRK13961.1"/>
    <property type="match status" value="1"/>
</dbReference>
<dbReference type="NCBIfam" id="TIGR00081">
    <property type="entry name" value="purC"/>
    <property type="match status" value="1"/>
</dbReference>
<dbReference type="PANTHER" id="PTHR43700">
    <property type="entry name" value="PHOSPHORIBOSYLAMINOIMIDAZOLE-SUCCINOCARBOXAMIDE SYNTHASE"/>
    <property type="match status" value="1"/>
</dbReference>
<dbReference type="PANTHER" id="PTHR43700:SF1">
    <property type="entry name" value="PHOSPHORIBOSYLAMINOIMIDAZOLE-SUCCINOCARBOXAMIDE SYNTHASE"/>
    <property type="match status" value="1"/>
</dbReference>
<dbReference type="Pfam" id="PF01259">
    <property type="entry name" value="SAICAR_synt"/>
    <property type="match status" value="1"/>
</dbReference>
<dbReference type="SUPFAM" id="SSF56104">
    <property type="entry name" value="SAICAR synthase-like"/>
    <property type="match status" value="1"/>
</dbReference>
<dbReference type="PROSITE" id="PS01058">
    <property type="entry name" value="SAICAR_SYNTHETASE_2"/>
    <property type="match status" value="1"/>
</dbReference>
<sequence>MSGFVEKPEPLQVPGLVHLHTGKVRDLYQNEAGDLVMVASDRLSAFDWVLPTEIPDKGRVLTQLSLWWFDRLVDLAPNHVLSTELPPGAPADWQGRTLICKSLKMEPVECVARGYLTGSGLVEYNETRTVCGLALPEGLVDGSELPGPIFTPATKAAVGEHDENVSYEEVARQVGAETAAKLRQTTLAVYARARDIARRRGIILADTKFEFGFDGDTLVLADEVLTPDSSRFWPADQWEPGRAQPSFDKQFVRDWLTSPESGWDRKSEQPPPPLPQHVVDATRAKYVEAYERLTGANWS</sequence>
<protein>
    <recommendedName>
        <fullName evidence="1">Phosphoribosylaminoimidazole-succinocarboxamide synthase</fullName>
        <ecNumber evidence="1">6.3.2.6</ecNumber>
    </recommendedName>
    <alternativeName>
        <fullName evidence="1">SAICAR synthetase</fullName>
    </alternativeName>
</protein>
<comment type="catalytic activity">
    <reaction evidence="1">
        <text>5-amino-1-(5-phospho-D-ribosyl)imidazole-4-carboxylate + L-aspartate + ATP = (2S)-2-[5-amino-1-(5-phospho-beta-D-ribosyl)imidazole-4-carboxamido]succinate + ADP + phosphate + 2 H(+)</text>
        <dbReference type="Rhea" id="RHEA:22628"/>
        <dbReference type="ChEBI" id="CHEBI:15378"/>
        <dbReference type="ChEBI" id="CHEBI:29991"/>
        <dbReference type="ChEBI" id="CHEBI:30616"/>
        <dbReference type="ChEBI" id="CHEBI:43474"/>
        <dbReference type="ChEBI" id="CHEBI:58443"/>
        <dbReference type="ChEBI" id="CHEBI:77657"/>
        <dbReference type="ChEBI" id="CHEBI:456216"/>
        <dbReference type="EC" id="6.3.2.6"/>
    </reaction>
</comment>
<comment type="pathway">
    <text evidence="1">Purine metabolism; IMP biosynthesis via de novo pathway; 5-amino-1-(5-phospho-D-ribosyl)imidazole-4-carboxamide from 5-amino-1-(5-phospho-D-ribosyl)imidazole-4-carboxylate: step 1/2.</text>
</comment>
<comment type="similarity">
    <text evidence="1">Belongs to the SAICAR synthetase family.</text>
</comment>
<accession>Q82FV6</accession>
<name>PUR7_STRAW</name>
<gene>
    <name evidence="1" type="primary">purC</name>
    <name type="ordered locus">SAV_4146</name>
</gene>